<name>YCIB_ALIFM</name>
<protein>
    <recommendedName>
        <fullName evidence="1">Inner membrane-spanning protein YciB</fullName>
    </recommendedName>
</protein>
<proteinExistence type="inferred from homology"/>
<dbReference type="EMBL" id="CP001139">
    <property type="protein sequence ID" value="ACH65391.1"/>
    <property type="molecule type" value="Genomic_DNA"/>
</dbReference>
<dbReference type="RefSeq" id="WP_005418762.1">
    <property type="nucleotide sequence ID" value="NC_011184.1"/>
</dbReference>
<dbReference type="KEGG" id="vfm:VFMJ11_1108"/>
<dbReference type="HOGENOM" id="CLU_089554_2_0_6"/>
<dbReference type="Proteomes" id="UP000001857">
    <property type="component" value="Chromosome I"/>
</dbReference>
<dbReference type="GO" id="GO:0005886">
    <property type="term" value="C:plasma membrane"/>
    <property type="evidence" value="ECO:0007669"/>
    <property type="project" value="UniProtKB-SubCell"/>
</dbReference>
<dbReference type="HAMAP" id="MF_00189">
    <property type="entry name" value="YciB"/>
    <property type="match status" value="1"/>
</dbReference>
<dbReference type="InterPro" id="IPR006008">
    <property type="entry name" value="YciB"/>
</dbReference>
<dbReference type="NCBIfam" id="TIGR00997">
    <property type="entry name" value="ispZ"/>
    <property type="match status" value="1"/>
</dbReference>
<dbReference type="NCBIfam" id="NF001324">
    <property type="entry name" value="PRK00259.1-2"/>
    <property type="match status" value="1"/>
</dbReference>
<dbReference type="NCBIfam" id="NF001325">
    <property type="entry name" value="PRK00259.1-3"/>
    <property type="match status" value="1"/>
</dbReference>
<dbReference type="PANTHER" id="PTHR36917:SF1">
    <property type="entry name" value="INNER MEMBRANE-SPANNING PROTEIN YCIB"/>
    <property type="match status" value="1"/>
</dbReference>
<dbReference type="PANTHER" id="PTHR36917">
    <property type="entry name" value="INTRACELLULAR SEPTATION PROTEIN A-RELATED"/>
    <property type="match status" value="1"/>
</dbReference>
<dbReference type="Pfam" id="PF04279">
    <property type="entry name" value="IspA"/>
    <property type="match status" value="1"/>
</dbReference>
<keyword id="KW-0997">Cell inner membrane</keyword>
<keyword id="KW-1003">Cell membrane</keyword>
<keyword id="KW-0472">Membrane</keyword>
<keyword id="KW-0812">Transmembrane</keyword>
<keyword id="KW-1133">Transmembrane helix</keyword>
<feature type="chain" id="PRO_1000098900" description="Inner membrane-spanning protein YciB">
    <location>
        <begin position="1"/>
        <end position="181"/>
    </location>
</feature>
<feature type="transmembrane region" description="Helical" evidence="1">
    <location>
        <begin position="22"/>
        <end position="42"/>
    </location>
</feature>
<feature type="transmembrane region" description="Helical" evidence="1">
    <location>
        <begin position="50"/>
        <end position="70"/>
    </location>
</feature>
<feature type="transmembrane region" description="Helical" evidence="1">
    <location>
        <begin position="80"/>
        <end position="100"/>
    </location>
</feature>
<feature type="transmembrane region" description="Helical" evidence="1">
    <location>
        <begin position="122"/>
        <end position="142"/>
    </location>
</feature>
<feature type="transmembrane region" description="Helical" evidence="1">
    <location>
        <begin position="148"/>
        <end position="168"/>
    </location>
</feature>
<gene>
    <name evidence="1" type="primary">yciB</name>
    <name type="ordered locus">VFMJ11_1108</name>
</gene>
<evidence type="ECO:0000255" key="1">
    <source>
        <dbReference type="HAMAP-Rule" id="MF_00189"/>
    </source>
</evidence>
<sequence length="181" mass="20859">MKQILDFIPLIIFFALYKMYDIYTATGALIIATAIQLVVTYALYKKVEKMQLITFIMVTVFGGMTIFLHDDNFIKWKVTIVYCVFAAGLIIAHILGKPVIKGMLGKEVTLPDDKWAKINHAWVLFFTVCAIANLYVAFEMPLDVWVNFKVFGLLGLTFLYTLFTGMYVYKHMPKEKKEEQE</sequence>
<comment type="function">
    <text evidence="1">Plays a role in cell envelope biogenesis, maintenance of cell envelope integrity and membrane homeostasis.</text>
</comment>
<comment type="subcellular location">
    <subcellularLocation>
        <location evidence="1">Cell inner membrane</location>
        <topology evidence="1">Multi-pass membrane protein</topology>
    </subcellularLocation>
</comment>
<comment type="similarity">
    <text evidence="1">Belongs to the YciB family.</text>
</comment>
<organism>
    <name type="scientific">Aliivibrio fischeri (strain MJ11)</name>
    <name type="common">Vibrio fischeri</name>
    <dbReference type="NCBI Taxonomy" id="388396"/>
    <lineage>
        <taxon>Bacteria</taxon>
        <taxon>Pseudomonadati</taxon>
        <taxon>Pseudomonadota</taxon>
        <taxon>Gammaproteobacteria</taxon>
        <taxon>Vibrionales</taxon>
        <taxon>Vibrionaceae</taxon>
        <taxon>Aliivibrio</taxon>
    </lineage>
</organism>
<reference key="1">
    <citation type="submission" date="2008-08" db="EMBL/GenBank/DDBJ databases">
        <title>Complete sequence of Vibrio fischeri strain MJ11.</title>
        <authorList>
            <person name="Mandel M.J."/>
            <person name="Stabb E.V."/>
            <person name="Ruby E.G."/>
            <person name="Ferriera S."/>
            <person name="Johnson J."/>
            <person name="Kravitz S."/>
            <person name="Beeson K."/>
            <person name="Sutton G."/>
            <person name="Rogers Y.-H."/>
            <person name="Friedman R."/>
            <person name="Frazier M."/>
            <person name="Venter J.C."/>
        </authorList>
    </citation>
    <scope>NUCLEOTIDE SEQUENCE [LARGE SCALE GENOMIC DNA]</scope>
    <source>
        <strain>MJ11</strain>
    </source>
</reference>
<accession>B5FDB4</accession>